<protein>
    <recommendedName>
        <fullName>Zinc transporter ZIP1</fullName>
    </recommendedName>
    <alternativeName>
        <fullName>DrZIP1</fullName>
    </alternativeName>
    <alternativeName>
        <fullName>Solute carrier family 39 member 1</fullName>
    </alternativeName>
    <alternativeName>
        <fullName>Zrt- and Irt-like protein 1</fullName>
        <shortName>ZIP-1</shortName>
    </alternativeName>
</protein>
<proteinExistence type="evidence at transcript level"/>
<comment type="function">
    <text evidence="3">Transporter for the divalent cation Zn(2+). Mediates the influx of Zn(2+) into cells from extracellular space.</text>
</comment>
<comment type="catalytic activity">
    <reaction evidence="3">
        <text>Zn(2+)(in) = Zn(2+)(out)</text>
        <dbReference type="Rhea" id="RHEA:29351"/>
        <dbReference type="ChEBI" id="CHEBI:29105"/>
    </reaction>
    <physiologicalReaction direction="left-to-right" evidence="3">
        <dbReference type="Rhea" id="RHEA:29352"/>
    </physiologicalReaction>
</comment>
<comment type="subcellular location">
    <subcellularLocation>
        <location evidence="1">Cell membrane</location>
        <topology evidence="2">Multi-pass membrane protein</topology>
    </subcellularLocation>
    <subcellularLocation>
        <location evidence="1">Endoplasmic reticulum membrane</location>
        <topology evidence="2">Multi-pass membrane protein</topology>
    </subcellularLocation>
    <text evidence="1">Shows a vesicular localization corresponding partially to the endoplasmic reticulum in several epithelial cell lines.</text>
</comment>
<comment type="tissue specificity">
    <text evidence="3">Ubiquitous. Highest levels in ovary, high levels in heart, eye, kidney and brain, moderate levels in intestine and low levels in gill and skin.</text>
</comment>
<comment type="similarity">
    <text evidence="4">Belongs to the ZIP transporter (TC 2.A.5) family.</text>
</comment>
<name>S39A1_DANRE</name>
<dbReference type="EMBL" id="AY314992">
    <property type="protein sequence ID" value="AAP83180.1"/>
    <property type="molecule type" value="mRNA"/>
</dbReference>
<dbReference type="EMBL" id="BC096852">
    <property type="protein sequence ID" value="AAH96852.1"/>
    <property type="molecule type" value="mRNA"/>
</dbReference>
<dbReference type="RefSeq" id="NP_997748.2">
    <property type="nucleotide sequence ID" value="NM_212583.2"/>
</dbReference>
<dbReference type="SMR" id="P59889"/>
<dbReference type="FunCoup" id="P59889">
    <property type="interactions" value="1506"/>
</dbReference>
<dbReference type="STRING" id="7955.ENSDARP00000062256"/>
<dbReference type="TCDB" id="2.A.5.3.5">
    <property type="family name" value="the zinc (zn(2+))-iron (fe(2+)) permease (zip) family"/>
</dbReference>
<dbReference type="PaxDb" id="7955-ENSDARP00000062256"/>
<dbReference type="Ensembl" id="ENSDART00000062257">
    <property type="protein sequence ID" value="ENSDARP00000062256"/>
    <property type="gene ID" value="ENSDARG00000058257"/>
</dbReference>
<dbReference type="Ensembl" id="ENSDART00000191509">
    <property type="protein sequence ID" value="ENSDARP00000153420"/>
    <property type="gene ID" value="ENSDARG00000112079"/>
</dbReference>
<dbReference type="GeneID" id="321324"/>
<dbReference type="KEGG" id="dre:321324"/>
<dbReference type="AGR" id="ZFIN:ZDB-GENE-030131-9917"/>
<dbReference type="CTD" id="27173"/>
<dbReference type="ZFIN" id="ZDB-GENE-030131-9917">
    <property type="gene designation" value="slc39a1"/>
</dbReference>
<dbReference type="eggNOG" id="KOG1558">
    <property type="taxonomic scope" value="Eukaryota"/>
</dbReference>
<dbReference type="HOGENOM" id="CLU_040462_1_0_1"/>
<dbReference type="InParanoid" id="P59889"/>
<dbReference type="OMA" id="VMEICIA"/>
<dbReference type="OrthoDB" id="448280at2759"/>
<dbReference type="PhylomeDB" id="P59889"/>
<dbReference type="TreeFam" id="TF317098"/>
<dbReference type="Reactome" id="R-DRE-442380">
    <property type="pathway name" value="Zinc influx into cells by the SLC39 gene family"/>
</dbReference>
<dbReference type="PRO" id="PR:P59889"/>
<dbReference type="Proteomes" id="UP000000437">
    <property type="component" value="Alternate scaffold 7"/>
</dbReference>
<dbReference type="Proteomes" id="UP000000437">
    <property type="component" value="Chromosome 7"/>
</dbReference>
<dbReference type="Bgee" id="ENSDARG00000058257">
    <property type="expression patterns" value="Expressed in gastrula and 19 other cell types or tissues"/>
</dbReference>
<dbReference type="ExpressionAtlas" id="P59889">
    <property type="expression patterns" value="baseline and differential"/>
</dbReference>
<dbReference type="GO" id="GO:0005789">
    <property type="term" value="C:endoplasmic reticulum membrane"/>
    <property type="evidence" value="ECO:0007669"/>
    <property type="project" value="UniProtKB-SubCell"/>
</dbReference>
<dbReference type="GO" id="GO:0005886">
    <property type="term" value="C:plasma membrane"/>
    <property type="evidence" value="ECO:0000314"/>
    <property type="project" value="ZFIN"/>
</dbReference>
<dbReference type="GO" id="GO:0008270">
    <property type="term" value="F:zinc ion binding"/>
    <property type="evidence" value="ECO:0000314"/>
    <property type="project" value="ZFIN"/>
</dbReference>
<dbReference type="GO" id="GO:0005385">
    <property type="term" value="F:zinc ion transmembrane transporter activity"/>
    <property type="evidence" value="ECO:0000250"/>
    <property type="project" value="ZFIN"/>
</dbReference>
<dbReference type="GO" id="GO:0071577">
    <property type="term" value="P:zinc ion transmembrane transport"/>
    <property type="evidence" value="ECO:0000250"/>
    <property type="project" value="UniProtKB"/>
</dbReference>
<dbReference type="GO" id="GO:0006829">
    <property type="term" value="P:zinc ion transport"/>
    <property type="evidence" value="ECO:0000314"/>
    <property type="project" value="ZFIN"/>
</dbReference>
<dbReference type="InterPro" id="IPR003689">
    <property type="entry name" value="ZIP"/>
</dbReference>
<dbReference type="PANTHER" id="PTHR11040:SF120">
    <property type="entry name" value="ZINC TRANSPORTER ZIP2"/>
    <property type="match status" value="1"/>
</dbReference>
<dbReference type="PANTHER" id="PTHR11040">
    <property type="entry name" value="ZINC/IRON TRANSPORTER"/>
    <property type="match status" value="1"/>
</dbReference>
<dbReference type="Pfam" id="PF02535">
    <property type="entry name" value="Zip"/>
    <property type="match status" value="1"/>
</dbReference>
<feature type="chain" id="PRO_0000068765" description="Zinc transporter ZIP1">
    <location>
        <begin position="1"/>
        <end position="302"/>
    </location>
</feature>
<feature type="topological domain" description="Extracellular" evidence="2">
    <location>
        <begin position="1"/>
        <end position="6"/>
    </location>
</feature>
<feature type="transmembrane region" description="Helical" evidence="2">
    <location>
        <begin position="7"/>
        <end position="27"/>
    </location>
</feature>
<feature type="topological domain" description="Cytoplasmic" evidence="2">
    <location>
        <begin position="28"/>
        <end position="44"/>
    </location>
</feature>
<feature type="transmembrane region" description="Helical" evidence="2">
    <location>
        <begin position="45"/>
        <end position="65"/>
    </location>
</feature>
<feature type="topological domain" description="Extracellular" evidence="2">
    <location>
        <begin position="66"/>
        <end position="86"/>
    </location>
</feature>
<feature type="transmembrane region" description="Helical" evidence="2">
    <location>
        <begin position="87"/>
        <end position="107"/>
    </location>
</feature>
<feature type="topological domain" description="Cytoplasmic" evidence="2">
    <location>
        <begin position="108"/>
        <end position="158"/>
    </location>
</feature>
<feature type="transmembrane region" description="Helical" evidence="2">
    <location>
        <begin position="159"/>
        <end position="179"/>
    </location>
</feature>
<feature type="topological domain" description="Extracellular" evidence="2">
    <location>
        <begin position="180"/>
        <end position="185"/>
    </location>
</feature>
<feature type="transmembrane region" description="Helical" evidence="2">
    <location>
        <begin position="186"/>
        <end position="206"/>
    </location>
</feature>
<feature type="topological domain" description="Cytoplasmic" evidence="2">
    <location>
        <begin position="207"/>
        <end position="219"/>
    </location>
</feature>
<feature type="transmembrane region" description="Helical" evidence="2">
    <location>
        <begin position="220"/>
        <end position="240"/>
    </location>
</feature>
<feature type="topological domain" description="Extracellular" evidence="2">
    <location>
        <begin position="241"/>
        <end position="247"/>
    </location>
</feature>
<feature type="transmembrane region" description="Helical" evidence="2">
    <location>
        <begin position="248"/>
        <end position="268"/>
    </location>
</feature>
<feature type="topological domain" description="Cytoplasmic" evidence="2">
    <location>
        <begin position="269"/>
        <end position="281"/>
    </location>
</feature>
<feature type="transmembrane region" description="Helical" evidence="2">
    <location>
        <begin position="282"/>
        <end position="302"/>
    </location>
</feature>
<feature type="sequence conflict" description="In Ref. 2; AAH96852." evidence="4" ref="2">
    <original>K</original>
    <variation>R</variation>
    <location>
        <position position="8"/>
    </location>
</feature>
<gene>
    <name type="primary">slc39a1</name>
    <name type="synonym">zip1</name>
    <name type="ORF">sb:cb629</name>
    <name type="ORF">zgc:111852</name>
</gene>
<evidence type="ECO:0000250" key="1">
    <source>
        <dbReference type="UniProtKB" id="Q9NY26"/>
    </source>
</evidence>
<evidence type="ECO:0000255" key="2"/>
<evidence type="ECO:0000269" key="3">
    <source>
    </source>
</evidence>
<evidence type="ECO:0000305" key="4"/>
<sequence>MDYLLQVKVGALVGLLLLTLFFGFIPARMKWFHVTGGTELHKAVLSFVSCFAGGVFLSACLLDIIPDYLSDIHGELQKRDLDDGFPLPEFIMACGFFTVLILEKMVLSCTEGHRNEETAPLLAPAAPNGHAHGHPSVNDLEGSGHHVHVDFHAHSSFRSFMLFLSLSLHSVFEGLAIGLQTTNAKVLEICIAILVHKSIIVFSLSVKLVQSAVKPLWVVLYVTVFAIMSPLGIGIGIVVIETERQAGGLIQAVLEGLAAGTFIYITFLEILPHELNSSERPLLKVLFLLCGFSIMAALCFLG</sequence>
<organism>
    <name type="scientific">Danio rerio</name>
    <name type="common">Zebrafish</name>
    <name type="synonym">Brachydanio rerio</name>
    <dbReference type="NCBI Taxonomy" id="7955"/>
    <lineage>
        <taxon>Eukaryota</taxon>
        <taxon>Metazoa</taxon>
        <taxon>Chordata</taxon>
        <taxon>Craniata</taxon>
        <taxon>Vertebrata</taxon>
        <taxon>Euteleostomi</taxon>
        <taxon>Actinopterygii</taxon>
        <taxon>Neopterygii</taxon>
        <taxon>Teleostei</taxon>
        <taxon>Ostariophysi</taxon>
        <taxon>Cypriniformes</taxon>
        <taxon>Danionidae</taxon>
        <taxon>Danioninae</taxon>
        <taxon>Danio</taxon>
    </lineage>
</organism>
<accession>P59889</accession>
<accession>Q4V9K6</accession>
<reference key="1">
    <citation type="journal article" date="2005" name="Biochem. J.">
        <title>Molecular cloning and functional characterization of a high-affinity zinc importer (DrZIP1) from zebrafish (Danio rerio).</title>
        <authorList>
            <person name="Qiu A."/>
            <person name="Shayeghi M."/>
            <person name="Hogstrand C."/>
        </authorList>
    </citation>
    <scope>NUCLEOTIDE SEQUENCE [MRNA]</scope>
    <scope>FUNCTION</scope>
    <scope>TRANSPORTER ACTIVITY</scope>
    <scope>SUBCELLULAR LOCATION</scope>
    <scope>TISSUE SPECIFICITY</scope>
    <source>
        <tissue>Gill</tissue>
    </source>
</reference>
<reference key="2">
    <citation type="submission" date="2005-06" db="EMBL/GenBank/DDBJ databases">
        <authorList>
            <consortium name="NIH - Zebrafish Gene Collection (ZGC) project"/>
        </authorList>
    </citation>
    <scope>NUCLEOTIDE SEQUENCE [LARGE SCALE MRNA]</scope>
    <source>
        <strain>AB</strain>
        <tissue>Intestine</tissue>
    </source>
</reference>
<keyword id="KW-1003">Cell membrane</keyword>
<keyword id="KW-0256">Endoplasmic reticulum</keyword>
<keyword id="KW-0406">Ion transport</keyword>
<keyword id="KW-0472">Membrane</keyword>
<keyword id="KW-1185">Reference proteome</keyword>
<keyword id="KW-0812">Transmembrane</keyword>
<keyword id="KW-1133">Transmembrane helix</keyword>
<keyword id="KW-0813">Transport</keyword>
<keyword id="KW-0862">Zinc</keyword>
<keyword id="KW-0864">Zinc transport</keyword>